<accession>A5III7</accession>
<gene>
    <name evidence="1" type="primary">atpF</name>
    <name type="ordered locus">LPC_3301</name>
</gene>
<comment type="function">
    <text evidence="1">F(1)F(0) ATP synthase produces ATP from ADP in the presence of a proton or sodium gradient. F-type ATPases consist of two structural domains, F(1) containing the extramembraneous catalytic core and F(0) containing the membrane proton channel, linked together by a central stalk and a peripheral stalk. During catalysis, ATP synthesis in the catalytic domain of F(1) is coupled via a rotary mechanism of the central stalk subunits to proton translocation.</text>
</comment>
<comment type="function">
    <text evidence="1">Component of the F(0) channel, it forms part of the peripheral stalk, linking F(1) to F(0).</text>
</comment>
<comment type="subunit">
    <text evidence="1">F-type ATPases have 2 components, F(1) - the catalytic core - and F(0) - the membrane proton channel. F(1) has five subunits: alpha(3), beta(3), gamma(1), delta(1), epsilon(1). F(0) has three main subunits: a(1), b(2) and c(10-14). The alpha and beta chains form an alternating ring which encloses part of the gamma chain. F(1) is attached to F(0) by a central stalk formed by the gamma and epsilon chains, while a peripheral stalk is formed by the delta and b chains.</text>
</comment>
<comment type="subcellular location">
    <subcellularLocation>
        <location evidence="1">Cell inner membrane</location>
        <topology evidence="1">Single-pass membrane protein</topology>
    </subcellularLocation>
</comment>
<comment type="similarity">
    <text evidence="1">Belongs to the ATPase B chain family.</text>
</comment>
<name>ATPF_LEGPC</name>
<protein>
    <recommendedName>
        <fullName evidence="1">ATP synthase subunit b</fullName>
    </recommendedName>
    <alternativeName>
        <fullName evidence="1">ATP synthase F(0) sector subunit b</fullName>
    </alternativeName>
    <alternativeName>
        <fullName evidence="1">ATPase subunit I</fullName>
    </alternativeName>
    <alternativeName>
        <fullName evidence="1">F-type ATPase subunit b</fullName>
        <shortName evidence="1">F-ATPase subunit b</shortName>
    </alternativeName>
</protein>
<feature type="chain" id="PRO_0000368553" description="ATP synthase subunit b">
    <location>
        <begin position="1"/>
        <end position="156"/>
    </location>
</feature>
<feature type="transmembrane region" description="Helical" evidence="1">
    <location>
        <begin position="5"/>
        <end position="25"/>
    </location>
</feature>
<dbReference type="EMBL" id="CP000675">
    <property type="protein sequence ID" value="ABQ57187.1"/>
    <property type="molecule type" value="Genomic_DNA"/>
</dbReference>
<dbReference type="RefSeq" id="WP_010948670.1">
    <property type="nucleotide sequence ID" value="NZ_JAPMSS010000003.1"/>
</dbReference>
<dbReference type="SMR" id="A5III7"/>
<dbReference type="KEGG" id="lpc:LPC_3301"/>
<dbReference type="HOGENOM" id="CLU_079215_4_5_6"/>
<dbReference type="GO" id="GO:0005886">
    <property type="term" value="C:plasma membrane"/>
    <property type="evidence" value="ECO:0007669"/>
    <property type="project" value="UniProtKB-SubCell"/>
</dbReference>
<dbReference type="GO" id="GO:0045259">
    <property type="term" value="C:proton-transporting ATP synthase complex"/>
    <property type="evidence" value="ECO:0007669"/>
    <property type="project" value="UniProtKB-KW"/>
</dbReference>
<dbReference type="GO" id="GO:0046933">
    <property type="term" value="F:proton-transporting ATP synthase activity, rotational mechanism"/>
    <property type="evidence" value="ECO:0007669"/>
    <property type="project" value="UniProtKB-UniRule"/>
</dbReference>
<dbReference type="GO" id="GO:0046961">
    <property type="term" value="F:proton-transporting ATPase activity, rotational mechanism"/>
    <property type="evidence" value="ECO:0007669"/>
    <property type="project" value="TreeGrafter"/>
</dbReference>
<dbReference type="CDD" id="cd06503">
    <property type="entry name" value="ATP-synt_Fo_b"/>
    <property type="match status" value="1"/>
</dbReference>
<dbReference type="Gene3D" id="6.10.250.1580">
    <property type="match status" value="1"/>
</dbReference>
<dbReference type="HAMAP" id="MF_01398">
    <property type="entry name" value="ATP_synth_b_bprime"/>
    <property type="match status" value="1"/>
</dbReference>
<dbReference type="InterPro" id="IPR028987">
    <property type="entry name" value="ATP_synth_B-like_membr_sf"/>
</dbReference>
<dbReference type="InterPro" id="IPR002146">
    <property type="entry name" value="ATP_synth_b/b'su_bac/chlpt"/>
</dbReference>
<dbReference type="InterPro" id="IPR005864">
    <property type="entry name" value="ATP_synth_F0_bsu_bac"/>
</dbReference>
<dbReference type="InterPro" id="IPR050059">
    <property type="entry name" value="ATP_synthase_B_chain"/>
</dbReference>
<dbReference type="NCBIfam" id="TIGR01144">
    <property type="entry name" value="ATP_synt_b"/>
    <property type="match status" value="1"/>
</dbReference>
<dbReference type="NCBIfam" id="NF004411">
    <property type="entry name" value="PRK05759.1-2"/>
    <property type="match status" value="1"/>
</dbReference>
<dbReference type="PANTHER" id="PTHR33445:SF1">
    <property type="entry name" value="ATP SYNTHASE SUBUNIT B"/>
    <property type="match status" value="1"/>
</dbReference>
<dbReference type="PANTHER" id="PTHR33445">
    <property type="entry name" value="ATP SYNTHASE SUBUNIT B', CHLOROPLASTIC"/>
    <property type="match status" value="1"/>
</dbReference>
<dbReference type="Pfam" id="PF00430">
    <property type="entry name" value="ATP-synt_B"/>
    <property type="match status" value="1"/>
</dbReference>
<dbReference type="SUPFAM" id="SSF81573">
    <property type="entry name" value="F1F0 ATP synthase subunit B, membrane domain"/>
    <property type="match status" value="1"/>
</dbReference>
<organism>
    <name type="scientific">Legionella pneumophila (strain Corby)</name>
    <dbReference type="NCBI Taxonomy" id="400673"/>
    <lineage>
        <taxon>Bacteria</taxon>
        <taxon>Pseudomonadati</taxon>
        <taxon>Pseudomonadota</taxon>
        <taxon>Gammaproteobacteria</taxon>
        <taxon>Legionellales</taxon>
        <taxon>Legionellaceae</taxon>
        <taxon>Legionella</taxon>
    </lineage>
</organism>
<proteinExistence type="inferred from homology"/>
<reference key="1">
    <citation type="submission" date="2006-11" db="EMBL/GenBank/DDBJ databases">
        <title>Identification and characterization of a new conjugation/ type IVA secretion system (trb/tra) of L. pneumophila Corby localized on a mobile genomic island.</title>
        <authorList>
            <person name="Gloeckner G."/>
            <person name="Albert-Weissenberger C."/>
            <person name="Weinmann E."/>
            <person name="Jacobi S."/>
            <person name="Schunder E."/>
            <person name="Steinert M."/>
            <person name="Buchrieser C."/>
            <person name="Hacker J."/>
            <person name="Heuner K."/>
        </authorList>
    </citation>
    <scope>NUCLEOTIDE SEQUENCE [LARGE SCALE GENOMIC DNA]</scope>
    <source>
        <strain>Corby</strain>
    </source>
</reference>
<sequence length="156" mass="17456">MDINLTLIVQMLVFAAFVLFTMKLVWPPLAKALEERQDKIADGLAAAERGRKELELAQHRVKDELKQAKAHSADIIDKANKRASEIIEAAKEAAKREAQIQAKLAQEQIAQQVNHAKEELRKQVAKLAITGAEKILMREVDAKANSELLDNLIEEI</sequence>
<keyword id="KW-0066">ATP synthesis</keyword>
<keyword id="KW-0997">Cell inner membrane</keyword>
<keyword id="KW-1003">Cell membrane</keyword>
<keyword id="KW-0138">CF(0)</keyword>
<keyword id="KW-0375">Hydrogen ion transport</keyword>
<keyword id="KW-0406">Ion transport</keyword>
<keyword id="KW-0472">Membrane</keyword>
<keyword id="KW-0812">Transmembrane</keyword>
<keyword id="KW-1133">Transmembrane helix</keyword>
<keyword id="KW-0813">Transport</keyword>
<evidence type="ECO:0000255" key="1">
    <source>
        <dbReference type="HAMAP-Rule" id="MF_01398"/>
    </source>
</evidence>